<accession>Q8A2H2</accession>
<comment type="function">
    <text evidence="2 5">Exosulfatase involved in the degradation of the glycosaminoglycans (GAGs) chondroitin sulfate (CS) and dermatan sulfate (DS). Catalyzes the hydrolysis of the 6-sulfate groups of the N-acetyl-D-galactosamine 6-sulfate units (PubMed:25002587). GAG-specific sulfatases play a key role in the persistence of the major human gut symbiont B.thetaiotaomicron in the host gastrointestinal tract (PubMed:25002587).</text>
</comment>
<comment type="PTM">
    <text evidence="1">The conversion to 3-oxoalanine (also known as C-formylglycine, FGly), of a serine or cysteine residue in prokaryotes and of a cysteine residue in eukaryotes, is critical for catalytic activity.</text>
</comment>
<comment type="similarity">
    <text evidence="4">Belongs to the sulfatase family.</text>
</comment>
<proteinExistence type="evidence at protein level"/>
<protein>
    <recommendedName>
        <fullName evidence="3">N-acetylgalactosamine-6-O-sulfatase</fullName>
        <ecNumber evidence="2">3.1.6.-</ecNumber>
    </recommendedName>
</protein>
<reference key="1">
    <citation type="journal article" date="2003" name="Science">
        <title>A genomic view of the human-Bacteroides thetaiotaomicron symbiosis.</title>
        <authorList>
            <person name="Xu J."/>
            <person name="Bjursell M.K."/>
            <person name="Himrod J."/>
            <person name="Deng S."/>
            <person name="Carmichael L.K."/>
            <person name="Chiang H.C."/>
            <person name="Hooper L.V."/>
            <person name="Gordon J.I."/>
        </authorList>
    </citation>
    <scope>NUCLEOTIDE SEQUENCE [LARGE SCALE GENOMIC DNA]</scope>
    <source>
        <strain>ATCC 29148 / DSM 2079 / JCM 5827 / CCUG 10774 / NCTC 10582 / VPI-5482 / E50</strain>
    </source>
</reference>
<reference key="2">
    <citation type="journal article" date="2009" name="Proc. Natl. Acad. Sci. U.S.A.">
        <title>Characterizing a model human gut microbiota composed of members of its two dominant bacterial phyla.</title>
        <authorList>
            <person name="Mahowald M.A."/>
            <person name="Rey F.E."/>
            <person name="Seedorf H."/>
            <person name="Turnbaugh P.J."/>
            <person name="Fulton R.S."/>
            <person name="Wollam A."/>
            <person name="Shah N."/>
            <person name="Wang C."/>
            <person name="Magrini V."/>
            <person name="Wilson R.K."/>
            <person name="Cantarel B.L."/>
            <person name="Coutinho P.M."/>
            <person name="Henrissat B."/>
            <person name="Crock L.W."/>
            <person name="Russell A."/>
            <person name="Verberkmoes N.C."/>
            <person name="Hettich R.L."/>
            <person name="Gordon J.I."/>
        </authorList>
    </citation>
    <scope>NUCLEOTIDE SEQUENCE [LARGE SCALE GENOMIC DNA]</scope>
    <source>
        <strain>ATCC 29148 / DSM 2079 / JCM 5827 / CCUG 10774 / NCTC 10582 / VPI-5482 / E50</strain>
    </source>
</reference>
<reference key="3">
    <citation type="journal article" date="2014" name="J. Biol. Chem.">
        <title>Characterization of glycosaminoglycan (GAG) sulfatases from the human gut symbiont Bacteroides thetaiotaomicron reveals the first GAG-specific bacterial endosulfatase.</title>
        <authorList>
            <person name="Ulmer J.E."/>
            <person name="Vilen E.M."/>
            <person name="Namburi R.B."/>
            <person name="Benjdia A."/>
            <person name="Beneteau J."/>
            <person name="Malleron A."/>
            <person name="Bonnaffe D."/>
            <person name="Driguez P.A."/>
            <person name="Descroix K."/>
            <person name="Lassalle G."/>
            <person name="Le Narvor C."/>
            <person name="Sandstroem C."/>
            <person name="Spillmann D."/>
            <person name="Berteau O."/>
        </authorList>
    </citation>
    <scope>FUNCTION</scope>
    <scope>CATALYTIC ACTIVITY</scope>
</reference>
<name>GALSF_BACTN</name>
<dbReference type="EC" id="3.1.6.-" evidence="2"/>
<dbReference type="EMBL" id="AE015928">
    <property type="protein sequence ID" value="AAO78439.1"/>
    <property type="molecule type" value="Genomic_DNA"/>
</dbReference>
<dbReference type="RefSeq" id="NP_812245.1">
    <property type="nucleotide sequence ID" value="NC_004663.1"/>
</dbReference>
<dbReference type="RefSeq" id="WP_011108775.1">
    <property type="nucleotide sequence ID" value="NC_004663.1"/>
</dbReference>
<dbReference type="PDB" id="6S20">
    <property type="method" value="X-ray"/>
    <property type="resolution" value="1.98 A"/>
    <property type="chains" value="C=22-511"/>
</dbReference>
<dbReference type="PDBsum" id="6S20"/>
<dbReference type="SMR" id="Q8A2H2"/>
<dbReference type="FunCoup" id="Q8A2H2">
    <property type="interactions" value="110"/>
</dbReference>
<dbReference type="STRING" id="226186.BT_3333"/>
<dbReference type="PaxDb" id="226186-BT_3333"/>
<dbReference type="EnsemblBacteria" id="AAO78439">
    <property type="protein sequence ID" value="AAO78439"/>
    <property type="gene ID" value="BT_3333"/>
</dbReference>
<dbReference type="GeneID" id="60924512"/>
<dbReference type="KEGG" id="bth:BT_3333"/>
<dbReference type="PATRIC" id="fig|226186.12.peg.3400"/>
<dbReference type="eggNOG" id="COG3119">
    <property type="taxonomic scope" value="Bacteria"/>
</dbReference>
<dbReference type="HOGENOM" id="CLU_006332_10_3_10"/>
<dbReference type="InParanoid" id="Q8A2H2"/>
<dbReference type="OrthoDB" id="9765065at2"/>
<dbReference type="Proteomes" id="UP000001414">
    <property type="component" value="Chromosome"/>
</dbReference>
<dbReference type="GO" id="GO:0016787">
    <property type="term" value="F:hydrolase activity"/>
    <property type="evidence" value="ECO:0007669"/>
    <property type="project" value="UniProtKB-KW"/>
</dbReference>
<dbReference type="CDD" id="cd16143">
    <property type="entry name" value="ARS_like"/>
    <property type="match status" value="1"/>
</dbReference>
<dbReference type="Gene3D" id="3.30.1120.10">
    <property type="match status" value="1"/>
</dbReference>
<dbReference type="Gene3D" id="3.40.720.10">
    <property type="entry name" value="Alkaline Phosphatase, subunit A"/>
    <property type="match status" value="1"/>
</dbReference>
<dbReference type="InterPro" id="IPR017850">
    <property type="entry name" value="Alkaline_phosphatase_core_sf"/>
</dbReference>
<dbReference type="InterPro" id="IPR052701">
    <property type="entry name" value="GAG_Ulvan_Degrading_Sulfatases"/>
</dbReference>
<dbReference type="InterPro" id="IPR024607">
    <property type="entry name" value="Sulfatase_CS"/>
</dbReference>
<dbReference type="InterPro" id="IPR000917">
    <property type="entry name" value="Sulfatase_N"/>
</dbReference>
<dbReference type="PANTHER" id="PTHR43751:SF6">
    <property type="entry name" value="N-ACETYLGALACTOSAMINE-6-O-SULFATASE"/>
    <property type="match status" value="1"/>
</dbReference>
<dbReference type="PANTHER" id="PTHR43751">
    <property type="entry name" value="SULFATASE"/>
    <property type="match status" value="1"/>
</dbReference>
<dbReference type="Pfam" id="PF00884">
    <property type="entry name" value="Sulfatase"/>
    <property type="match status" value="1"/>
</dbReference>
<dbReference type="SUPFAM" id="SSF53649">
    <property type="entry name" value="Alkaline phosphatase-like"/>
    <property type="match status" value="1"/>
</dbReference>
<dbReference type="PROSITE" id="PS51257">
    <property type="entry name" value="PROKAR_LIPOPROTEIN"/>
    <property type="match status" value="1"/>
</dbReference>
<dbReference type="PROSITE" id="PS00523">
    <property type="entry name" value="SULFATASE_1"/>
    <property type="match status" value="1"/>
</dbReference>
<dbReference type="PROSITE" id="PS00149">
    <property type="entry name" value="SULFATASE_2"/>
    <property type="match status" value="1"/>
</dbReference>
<sequence length="511" mass="56324">MKNVSRLLPLLPGIALLTGCNQKVQKDNGQNSQKPNIIYIFADDLGIGDLSCYGATKVSTPHIDRLAGQGVQFTNAYATSATSTPSRFGLLTGMYPWRQENTGIAPGNSELIIDTACVTMADMLKEAGYATGVVGKWHLGLGPKGGTDFNGHITPNAQSIGFDYEFVIPATVDRVPCVFVENGHVVGLDPNDPITVNYEHKVGDWPTGEENPELVKLKPSQGHNNTIINGIPRIGWMTGGKSALWKDEDIADIITNKAKSFIVSHKEEPFFLYMGTQDVHVPRVPHPRFAGKSGLGTRGDVILQLDWTIGEIMNTLDSLQLTDNTILIFTSDNGPVIDDGYQDQAFERLNGHTPMGIYRGGKYSAYEAGTRIPFIVRWPAKVKPNKQQALFSQIDIFASLAALLKQPLPEDAAPDSQEHLNTLLGKDYTSREYIVQQNLNNTLAIVKGQWKYIEPSDAPAIEYWTKMELGNDRHPQLYDLSADPSEKNNVAKQHPEVVRELSELLESVKTR</sequence>
<gene>
    <name evidence="6" type="ordered locus">BT_3333</name>
</gene>
<evidence type="ECO:0000250" key="1">
    <source>
        <dbReference type="UniProtKB" id="Q9X759"/>
    </source>
</evidence>
<evidence type="ECO:0000269" key="2">
    <source>
    </source>
</evidence>
<evidence type="ECO:0000303" key="3">
    <source>
    </source>
</evidence>
<evidence type="ECO:0000305" key="4"/>
<evidence type="ECO:0000305" key="5">
    <source>
    </source>
</evidence>
<evidence type="ECO:0000312" key="6">
    <source>
        <dbReference type="EMBL" id="AAO78439.1"/>
    </source>
</evidence>
<evidence type="ECO:0007829" key="7">
    <source>
        <dbReference type="PDB" id="6S20"/>
    </source>
</evidence>
<organism>
    <name type="scientific">Bacteroides thetaiotaomicron (strain ATCC 29148 / DSM 2079 / JCM 5827 / CCUG 10774 / NCTC 10582 / VPI-5482 / E50)</name>
    <dbReference type="NCBI Taxonomy" id="226186"/>
    <lineage>
        <taxon>Bacteria</taxon>
        <taxon>Pseudomonadati</taxon>
        <taxon>Bacteroidota</taxon>
        <taxon>Bacteroidia</taxon>
        <taxon>Bacteroidales</taxon>
        <taxon>Bacteroidaceae</taxon>
        <taxon>Bacteroides</taxon>
    </lineage>
</organism>
<keyword id="KW-0002">3D-structure</keyword>
<keyword id="KW-0378">Hydrolase</keyword>
<keyword id="KW-1185">Reference proteome</keyword>
<feature type="chain" id="PRO_0000446230" description="N-acetylgalactosamine-6-O-sulfatase">
    <location>
        <begin position="1"/>
        <end position="511"/>
    </location>
</feature>
<feature type="modified residue" description="3-oxoalanine (Ser)" evidence="1">
    <location>
        <position position="83"/>
    </location>
</feature>
<feature type="strand" evidence="7">
    <location>
        <begin position="36"/>
        <end position="44"/>
    </location>
</feature>
<feature type="helix" evidence="7">
    <location>
        <begin position="51"/>
        <end position="53"/>
    </location>
</feature>
<feature type="strand" evidence="7">
    <location>
        <begin position="56"/>
        <end position="58"/>
    </location>
</feature>
<feature type="helix" evidence="7">
    <location>
        <begin position="61"/>
        <end position="69"/>
    </location>
</feature>
<feature type="strand" evidence="7">
    <location>
        <begin position="70"/>
        <end position="77"/>
    </location>
</feature>
<feature type="strand" evidence="7">
    <location>
        <begin position="79"/>
        <end position="82"/>
    </location>
</feature>
<feature type="helix" evidence="7">
    <location>
        <begin position="83"/>
        <end position="92"/>
    </location>
</feature>
<feature type="helix" evidence="7">
    <location>
        <begin position="96"/>
        <end position="98"/>
    </location>
</feature>
<feature type="helix" evidence="7">
    <location>
        <begin position="120"/>
        <end position="126"/>
    </location>
</feature>
<feature type="strand" evidence="7">
    <location>
        <begin position="130"/>
        <end position="136"/>
    </location>
</feature>
<feature type="helix" evidence="7">
    <location>
        <begin position="157"/>
        <end position="160"/>
    </location>
</feature>
<feature type="strand" evidence="7">
    <location>
        <begin position="163"/>
        <end position="170"/>
    </location>
</feature>
<feature type="strand" evidence="7">
    <location>
        <begin position="195"/>
        <end position="200"/>
    </location>
</feature>
<feature type="turn" evidence="7">
    <location>
        <begin position="208"/>
        <end position="210"/>
    </location>
</feature>
<feature type="helix" evidence="7">
    <location>
        <begin position="212"/>
        <end position="214"/>
    </location>
</feature>
<feature type="strand" evidence="7">
    <location>
        <begin position="219"/>
        <end position="222"/>
    </location>
</feature>
<feature type="strand" evidence="7">
    <location>
        <begin position="225"/>
        <end position="228"/>
    </location>
</feature>
<feature type="strand" evidence="7">
    <location>
        <begin position="234"/>
        <end position="239"/>
    </location>
</feature>
<feature type="helix" evidence="7">
    <location>
        <begin position="241"/>
        <end position="243"/>
    </location>
</feature>
<feature type="helix" evidence="7">
    <location>
        <begin position="247"/>
        <end position="249"/>
    </location>
</feature>
<feature type="helix" evidence="7">
    <location>
        <begin position="250"/>
        <end position="264"/>
    </location>
</feature>
<feature type="turn" evidence="7">
    <location>
        <begin position="265"/>
        <end position="267"/>
    </location>
</feature>
<feature type="strand" evidence="7">
    <location>
        <begin position="270"/>
        <end position="275"/>
    </location>
</feature>
<feature type="strand" evidence="7">
    <location>
        <begin position="280"/>
        <end position="282"/>
    </location>
</feature>
<feature type="turn" evidence="7">
    <location>
        <begin position="287"/>
        <end position="291"/>
    </location>
</feature>
<feature type="strand" evidence="7">
    <location>
        <begin position="292"/>
        <end position="295"/>
    </location>
</feature>
<feature type="helix" evidence="7">
    <location>
        <begin position="296"/>
        <end position="318"/>
    </location>
</feature>
<feature type="strand" evidence="7">
    <location>
        <begin position="325"/>
        <end position="333"/>
    </location>
</feature>
<feature type="strand" evidence="7">
    <location>
        <begin position="339"/>
        <end position="341"/>
    </location>
</feature>
<feature type="turn" evidence="7">
    <location>
        <begin position="345"/>
        <end position="348"/>
    </location>
</feature>
<feature type="turn" evidence="7">
    <location>
        <begin position="354"/>
        <end position="357"/>
    </location>
</feature>
<feature type="helix" evidence="7">
    <location>
        <begin position="367"/>
        <end position="369"/>
    </location>
</feature>
<feature type="strand" evidence="7">
    <location>
        <begin position="374"/>
        <end position="377"/>
    </location>
</feature>
<feature type="turn" evidence="7">
    <location>
        <begin position="379"/>
        <end position="381"/>
    </location>
</feature>
<feature type="strand" evidence="7">
    <location>
        <begin position="385"/>
        <end position="387"/>
    </location>
</feature>
<feature type="helix" evidence="7">
    <location>
        <begin position="393"/>
        <end position="395"/>
    </location>
</feature>
<feature type="helix" evidence="7">
    <location>
        <begin position="396"/>
        <end position="403"/>
    </location>
</feature>
<feature type="helix" evidence="7">
    <location>
        <begin position="420"/>
        <end position="423"/>
    </location>
</feature>
<feature type="strand" evidence="7">
    <location>
        <begin position="434"/>
        <end position="437"/>
    </location>
</feature>
<feature type="strand" evidence="7">
    <location>
        <begin position="443"/>
        <end position="447"/>
    </location>
</feature>
<feature type="strand" evidence="7">
    <location>
        <begin position="450"/>
        <end position="453"/>
    </location>
</feature>
<feature type="turn" evidence="7">
    <location>
        <begin position="463"/>
        <end position="465"/>
    </location>
</feature>
<feature type="strand" evidence="7">
    <location>
        <begin position="476"/>
        <end position="479"/>
    </location>
</feature>
<feature type="turn" evidence="7">
    <location>
        <begin position="480"/>
        <end position="482"/>
    </location>
</feature>
<feature type="turn" evidence="7">
    <location>
        <begin position="491"/>
        <end position="493"/>
    </location>
</feature>
<feature type="helix" evidence="7">
    <location>
        <begin position="495"/>
        <end position="510"/>
    </location>
</feature>